<protein>
    <recommendedName>
        <fullName>ATP synthase subunit a</fullName>
    </recommendedName>
    <alternativeName>
        <fullName>F-ATPase protein 6</fullName>
    </alternativeName>
</protein>
<evidence type="ECO:0000255" key="1"/>
<evidence type="ECO:0000305" key="2"/>
<feature type="chain" id="PRO_0000082125" description="ATP synthase subunit a">
    <location>
        <begin position="1"/>
        <end position="256"/>
    </location>
</feature>
<feature type="transmembrane region" description="Helical" evidence="1">
    <location>
        <begin position="33"/>
        <end position="53"/>
    </location>
</feature>
<feature type="transmembrane region" description="Helical" evidence="1">
    <location>
        <begin position="92"/>
        <end position="112"/>
    </location>
</feature>
<feature type="transmembrane region" description="Helical" evidence="1">
    <location>
        <begin position="122"/>
        <end position="142"/>
    </location>
</feature>
<feature type="transmembrane region" description="Helical" evidence="1">
    <location>
        <begin position="148"/>
        <end position="168"/>
    </location>
</feature>
<feature type="transmembrane region" description="Helical" evidence="1">
    <location>
        <begin position="191"/>
        <end position="211"/>
    </location>
</feature>
<feature type="transmembrane region" description="Helical" evidence="1">
    <location>
        <begin position="235"/>
        <end position="255"/>
    </location>
</feature>
<geneLocation type="mitochondrion"/>
<proteinExistence type="inferred from homology"/>
<dbReference type="EMBL" id="D31785">
    <property type="protein sequence ID" value="BAA06566.2"/>
    <property type="molecule type" value="Genomic_DNA"/>
</dbReference>
<dbReference type="PIR" id="S58743">
    <property type="entry name" value="S58743"/>
</dbReference>
<dbReference type="RefSeq" id="NP_038211.1">
    <property type="nucleotide sequence ID" value="NC_001762.1"/>
</dbReference>
<dbReference type="SMR" id="P48879"/>
<dbReference type="GeneID" id="800567"/>
<dbReference type="GO" id="GO:0005743">
    <property type="term" value="C:mitochondrial inner membrane"/>
    <property type="evidence" value="ECO:0007669"/>
    <property type="project" value="UniProtKB-SubCell"/>
</dbReference>
<dbReference type="GO" id="GO:0045259">
    <property type="term" value="C:proton-transporting ATP synthase complex"/>
    <property type="evidence" value="ECO:0007669"/>
    <property type="project" value="UniProtKB-KW"/>
</dbReference>
<dbReference type="GO" id="GO:0046933">
    <property type="term" value="F:proton-transporting ATP synthase activity, rotational mechanism"/>
    <property type="evidence" value="ECO:0007669"/>
    <property type="project" value="TreeGrafter"/>
</dbReference>
<dbReference type="CDD" id="cd00310">
    <property type="entry name" value="ATP-synt_Fo_a_6"/>
    <property type="match status" value="1"/>
</dbReference>
<dbReference type="FunFam" id="1.20.120.220:FF:000003">
    <property type="entry name" value="ATP synthase subunit a"/>
    <property type="match status" value="1"/>
</dbReference>
<dbReference type="Gene3D" id="1.20.120.220">
    <property type="entry name" value="ATP synthase, F0 complex, subunit A"/>
    <property type="match status" value="1"/>
</dbReference>
<dbReference type="HAMAP" id="MF_01393">
    <property type="entry name" value="ATP_synth_a_bact"/>
    <property type="match status" value="1"/>
</dbReference>
<dbReference type="InterPro" id="IPR000568">
    <property type="entry name" value="ATP_synth_F0_asu"/>
</dbReference>
<dbReference type="InterPro" id="IPR023011">
    <property type="entry name" value="ATP_synth_F0_asu_AS"/>
</dbReference>
<dbReference type="InterPro" id="IPR045083">
    <property type="entry name" value="ATP_synth_F0_asu_bact/mt"/>
</dbReference>
<dbReference type="InterPro" id="IPR035908">
    <property type="entry name" value="F0_ATP_A_sf"/>
</dbReference>
<dbReference type="NCBIfam" id="TIGR01131">
    <property type="entry name" value="ATP_synt_6_or_A"/>
    <property type="match status" value="1"/>
</dbReference>
<dbReference type="PANTHER" id="PTHR11410">
    <property type="entry name" value="ATP SYNTHASE SUBUNIT A"/>
    <property type="match status" value="1"/>
</dbReference>
<dbReference type="PANTHER" id="PTHR11410:SF0">
    <property type="entry name" value="ATP SYNTHASE SUBUNIT A"/>
    <property type="match status" value="1"/>
</dbReference>
<dbReference type="Pfam" id="PF00119">
    <property type="entry name" value="ATP-synt_A"/>
    <property type="match status" value="1"/>
</dbReference>
<dbReference type="PRINTS" id="PR00123">
    <property type="entry name" value="ATPASEA"/>
</dbReference>
<dbReference type="SUPFAM" id="SSF81336">
    <property type="entry name" value="F1F0 ATP synthase subunit A"/>
    <property type="match status" value="1"/>
</dbReference>
<dbReference type="PROSITE" id="PS00449">
    <property type="entry name" value="ATPASE_A"/>
    <property type="match status" value="1"/>
</dbReference>
<organism>
    <name type="scientific">Wickerhamomyces canadensis</name>
    <name type="common">Yeast</name>
    <name type="synonym">Pichia canadensis</name>
    <dbReference type="NCBI Taxonomy" id="1156965"/>
    <lineage>
        <taxon>Eukaryota</taxon>
        <taxon>Fungi</taxon>
        <taxon>Dikarya</taxon>
        <taxon>Ascomycota</taxon>
        <taxon>Saccharomycotina</taxon>
        <taxon>Saccharomycetes</taxon>
        <taxon>Phaffomycetales</taxon>
        <taxon>Wickerhamomycetaceae</taxon>
        <taxon>Wickerhamomyces</taxon>
    </lineage>
</organism>
<comment type="function">
    <text>Mitochondrial membrane ATP synthase (F(1)F(0) ATP synthase or Complex V) produces ATP from ADP in the presence of a proton gradient across the membrane which is generated by electron transport complexes of the respiratory chain. F-type ATPases consist of two structural domains, F(1) - containing the extramembraneous catalytic core and F(0) - containing the membrane proton channel, linked together by a central stalk and a peripheral stalk. During catalysis, ATP synthesis in the catalytic domain of F(1) is coupled via a rotary mechanism of the central stalk subunits to proton translocation. Key component of the proton channel; it may play a direct role in the translocation of protons across the membrane.</text>
</comment>
<comment type="subunit">
    <text>F-type ATPases have 2 components, CF(1) - the catalytic core - and CF(0) - the membrane proton channel. CF(1) has five subunits: alpha(3), beta(3), gamma(1), delta(1), epsilon(1). CF(0) has three main subunits: a, b and c.</text>
</comment>
<comment type="subcellular location">
    <subcellularLocation>
        <location>Mitochondrion inner membrane</location>
        <topology>Multi-pass membrane protein</topology>
    </subcellularLocation>
</comment>
<comment type="similarity">
    <text evidence="2">Belongs to the ATPase A chain family.</text>
</comment>
<accession>P48879</accession>
<sequence length="256" mass="27991">MTNIIVNSPLDQFDIKVFIGFVSPFIDLTNINITTFTVYSVFILIVILGLTLLTDNNGRIIGNRWYVSQEAMYDTINNMVSGQIGGKLGGYYFPLIYTFFIFIFTANLIGMIPYSFAITSHMVFIISLSVVIWLGVTIIGLYTHGLTFFALFVPAGCPLALAPLLVLIELLSYSARAISLGLRLSANTLSGHLLMVILGGLVFNLMSVSIVTFVLGFIPLAGILAIVALEFAIAMIQSYVFAILASGYIKDGLYLH</sequence>
<keyword id="KW-0066">ATP synthesis</keyword>
<keyword id="KW-0138">CF(0)</keyword>
<keyword id="KW-0375">Hydrogen ion transport</keyword>
<keyword id="KW-0406">Ion transport</keyword>
<keyword id="KW-0472">Membrane</keyword>
<keyword id="KW-0496">Mitochondrion</keyword>
<keyword id="KW-0999">Mitochondrion inner membrane</keyword>
<keyword id="KW-0812">Transmembrane</keyword>
<keyword id="KW-1133">Transmembrane helix</keyword>
<keyword id="KW-0813">Transport</keyword>
<gene>
    <name type="primary">ATP6</name>
</gene>
<reference key="1">
    <citation type="journal article" date="1995" name="Curr. Genet.">
        <title>The complete mitochondrial DNA sequence of Hansenula wingei reveals new characteristics of yeast mitochondria.</title>
        <authorList>
            <person name="Sekito T."/>
            <person name="Okamoto K."/>
            <person name="Kitano H."/>
            <person name="Yoshida K."/>
        </authorList>
    </citation>
    <scope>NUCLEOTIDE SEQUENCE [LARGE SCALE GENOMIC DNA]</scope>
    <source>
        <strain>21</strain>
    </source>
</reference>
<name>ATP6_WICCA</name>